<sequence length="321" mass="32950">MTQTAAQQPSPRLVSGHGLATTAADGAVLDVWFPAPVAGPLSAADASLRDTLRALAADDADRGTTQAVVELEVDLDAAPASTADAWLRLHALSHRLARPNELNLDGVFGLLTNVVWTNHGPCAVADFELTRARLRARGAVQVYGVDKFPRMTDYVVPSGVRIGDADRVRLGAHLAEGTTVMHEGFVNFNAGTLGNSMVEGRISAGVVVGDGSDVGGGASIMGTLSGGGTQRIVVGEHVLLGANSGVGISVGDDCVVEAGLYVTAGTRVSVLQDGEAAHTVKAVDLSGVPNLLFRRNSTTGGVEALPRAGRTVELNAALHAN</sequence>
<keyword id="KW-0012">Acyltransferase</keyword>
<keyword id="KW-0028">Amino-acid biosynthesis</keyword>
<keyword id="KW-0963">Cytoplasm</keyword>
<keyword id="KW-0220">Diaminopimelate biosynthesis</keyword>
<keyword id="KW-0457">Lysine biosynthesis</keyword>
<keyword id="KW-0460">Magnesium</keyword>
<keyword id="KW-0479">Metal-binding</keyword>
<keyword id="KW-1185">Reference proteome</keyword>
<keyword id="KW-0808">Transferase</keyword>
<name>DAPD_MICLC</name>
<protein>
    <recommendedName>
        <fullName evidence="1">2,3,4,5-tetrahydropyridine-2,6-dicarboxylate N-succinyltransferase</fullName>
        <ecNumber evidence="1">2.3.1.117</ecNumber>
    </recommendedName>
    <alternativeName>
        <fullName evidence="1">Tetrahydrodipicolinate N-succinyltransferase</fullName>
        <shortName evidence="1">THDP succinyltransferase</shortName>
        <shortName evidence="1">THP succinyltransferase</shortName>
    </alternativeName>
    <alternativeName>
        <fullName evidence="1">Tetrahydropicolinate succinylase</fullName>
    </alternativeName>
</protein>
<evidence type="ECO:0000255" key="1">
    <source>
        <dbReference type="HAMAP-Rule" id="MF_02122"/>
    </source>
</evidence>
<comment type="function">
    <text evidence="1">Catalyzes the conversion of the cyclic tetrahydrodipicolinate (THDP) into the acyclic N-succinyl-L-2-amino-6-oxopimelate using succinyl-CoA.</text>
</comment>
<comment type="catalytic activity">
    <reaction evidence="1">
        <text>(S)-2,3,4,5-tetrahydrodipicolinate + succinyl-CoA + H2O = (S)-2-succinylamino-6-oxoheptanedioate + CoA</text>
        <dbReference type="Rhea" id="RHEA:17325"/>
        <dbReference type="ChEBI" id="CHEBI:15377"/>
        <dbReference type="ChEBI" id="CHEBI:15685"/>
        <dbReference type="ChEBI" id="CHEBI:16845"/>
        <dbReference type="ChEBI" id="CHEBI:57287"/>
        <dbReference type="ChEBI" id="CHEBI:57292"/>
        <dbReference type="EC" id="2.3.1.117"/>
    </reaction>
</comment>
<comment type="pathway">
    <text evidence="1">Amino-acid biosynthesis; L-lysine biosynthesis via DAP pathway; LL-2,6-diaminopimelate from (S)-tetrahydrodipicolinate (succinylase route): step 1/3.</text>
</comment>
<comment type="subunit">
    <text evidence="1">Homotrimer.</text>
</comment>
<comment type="subcellular location">
    <subcellularLocation>
        <location evidence="1">Cytoplasm</location>
    </subcellularLocation>
</comment>
<comment type="similarity">
    <text evidence="1">Belongs to the type 2 tetrahydrodipicolinate N-succinyltransferase family.</text>
</comment>
<organism>
    <name type="scientific">Micrococcus luteus (strain ATCC 4698 / DSM 20030 / JCM 1464 / CCM 169 / CCUG 5858 / IAM 1056 / NBRC 3333 / NCIMB 9278 / NCTC 2665 / VKM Ac-2230)</name>
    <name type="common">Micrococcus lysodeikticus</name>
    <dbReference type="NCBI Taxonomy" id="465515"/>
    <lineage>
        <taxon>Bacteria</taxon>
        <taxon>Bacillati</taxon>
        <taxon>Actinomycetota</taxon>
        <taxon>Actinomycetes</taxon>
        <taxon>Micrococcales</taxon>
        <taxon>Micrococcaceae</taxon>
        <taxon>Micrococcus</taxon>
    </lineage>
</organism>
<gene>
    <name evidence="1" type="primary">dapD</name>
    <name type="ordered locus">Mlut_15470</name>
</gene>
<proteinExistence type="inferred from homology"/>
<feature type="chain" id="PRO_0000412261" description="2,3,4,5-tetrahydropyridine-2,6-dicarboxylate N-succinyltransferase">
    <location>
        <begin position="1"/>
        <end position="321"/>
    </location>
</feature>
<feature type="active site" description="Acyl-anhydride intermediate" evidence="1">
    <location>
        <position position="199"/>
    </location>
</feature>
<feature type="binding site" evidence="1">
    <location>
        <position position="166"/>
    </location>
    <ligand>
        <name>Mg(2+)</name>
        <dbReference type="ChEBI" id="CHEBI:18420"/>
        <label>1</label>
        <note>ligand shared between trimeric partners</note>
    </ligand>
</feature>
<feature type="binding site" evidence="1">
    <location>
        <position position="183"/>
    </location>
    <ligand>
        <name>Mg(2+)</name>
        <dbReference type="ChEBI" id="CHEBI:18420"/>
        <label>2</label>
        <note>ligand shared between trimeric partners</note>
    </ligand>
</feature>
<feature type="binding site" evidence="1">
    <location>
        <position position="201"/>
    </location>
    <ligand>
        <name>succinyl-CoA</name>
        <dbReference type="ChEBI" id="CHEBI:57292"/>
    </ligand>
</feature>
<feature type="binding site" evidence="1">
    <location>
        <position position="216"/>
    </location>
    <ligand>
        <name>succinyl-CoA</name>
        <dbReference type="ChEBI" id="CHEBI:57292"/>
    </ligand>
</feature>
<feature type="binding site" evidence="1">
    <location>
        <position position="219"/>
    </location>
    <ligand>
        <name>succinyl-CoA</name>
        <dbReference type="ChEBI" id="CHEBI:57292"/>
    </ligand>
</feature>
<feature type="binding site" evidence="1">
    <location>
        <position position="242"/>
    </location>
    <ligand>
        <name>succinyl-CoA</name>
        <dbReference type="ChEBI" id="CHEBI:57292"/>
    </ligand>
</feature>
<feature type="binding site" evidence="1">
    <location>
        <begin position="257"/>
        <end position="258"/>
    </location>
    <ligand>
        <name>succinyl-CoA</name>
        <dbReference type="ChEBI" id="CHEBI:57292"/>
    </ligand>
</feature>
<feature type="binding site" evidence="1">
    <location>
        <position position="265"/>
    </location>
    <ligand>
        <name>succinyl-CoA</name>
        <dbReference type="ChEBI" id="CHEBI:57292"/>
    </ligand>
</feature>
<feature type="binding site" evidence="1">
    <location>
        <position position="281"/>
    </location>
    <ligand>
        <name>succinyl-CoA</name>
        <dbReference type="ChEBI" id="CHEBI:57292"/>
    </ligand>
</feature>
<feature type="binding site" evidence="1">
    <location>
        <begin position="294"/>
        <end position="297"/>
    </location>
    <ligand>
        <name>succinyl-CoA</name>
        <dbReference type="ChEBI" id="CHEBI:57292"/>
    </ligand>
</feature>
<dbReference type="EC" id="2.3.1.117" evidence="1"/>
<dbReference type="EMBL" id="CP001628">
    <property type="protein sequence ID" value="ACS31039.1"/>
    <property type="molecule type" value="Genomic_DNA"/>
</dbReference>
<dbReference type="RefSeq" id="WP_010080542.1">
    <property type="nucleotide sequence ID" value="NC_012803.1"/>
</dbReference>
<dbReference type="SMR" id="C5CBB6"/>
<dbReference type="STRING" id="465515.Mlut_15470"/>
<dbReference type="EnsemblBacteria" id="ACS31039">
    <property type="protein sequence ID" value="ACS31039"/>
    <property type="gene ID" value="Mlut_15470"/>
</dbReference>
<dbReference type="GeneID" id="93343418"/>
<dbReference type="KEGG" id="mlu:Mlut_15470"/>
<dbReference type="PATRIC" id="fig|465515.4.peg.1484"/>
<dbReference type="eggNOG" id="COG2171">
    <property type="taxonomic scope" value="Bacteria"/>
</dbReference>
<dbReference type="HOGENOM" id="CLU_057490_1_0_11"/>
<dbReference type="UniPathway" id="UPA00034">
    <property type="reaction ID" value="UER00019"/>
</dbReference>
<dbReference type="Proteomes" id="UP000000738">
    <property type="component" value="Chromosome"/>
</dbReference>
<dbReference type="GO" id="GO:0005737">
    <property type="term" value="C:cytoplasm"/>
    <property type="evidence" value="ECO:0007669"/>
    <property type="project" value="UniProtKB-SubCell"/>
</dbReference>
<dbReference type="GO" id="GO:0008666">
    <property type="term" value="F:2,3,4,5-tetrahydropyridine-2,6-dicarboxylate N-succinyltransferase activity"/>
    <property type="evidence" value="ECO:0007669"/>
    <property type="project" value="UniProtKB-UniRule"/>
</dbReference>
<dbReference type="GO" id="GO:0000287">
    <property type="term" value="F:magnesium ion binding"/>
    <property type="evidence" value="ECO:0007669"/>
    <property type="project" value="UniProtKB-UniRule"/>
</dbReference>
<dbReference type="GO" id="GO:0019877">
    <property type="term" value="P:diaminopimelate biosynthetic process"/>
    <property type="evidence" value="ECO:0007669"/>
    <property type="project" value="UniProtKB-UniRule"/>
</dbReference>
<dbReference type="GO" id="GO:0009089">
    <property type="term" value="P:lysine biosynthetic process via diaminopimelate"/>
    <property type="evidence" value="ECO:0007669"/>
    <property type="project" value="UniProtKB-UniRule"/>
</dbReference>
<dbReference type="CDD" id="cd04649">
    <property type="entry name" value="LbH_THP_succinylT_putative"/>
    <property type="match status" value="1"/>
</dbReference>
<dbReference type="Gene3D" id="3.30.70.2010">
    <property type="match status" value="1"/>
</dbReference>
<dbReference type="Gene3D" id="2.160.10.10">
    <property type="entry name" value="Hexapeptide repeat proteins"/>
    <property type="match status" value="1"/>
</dbReference>
<dbReference type="Gene3D" id="3.30.60.70">
    <property type="entry name" value="Trimeric LpxA-like enzymes"/>
    <property type="match status" value="1"/>
</dbReference>
<dbReference type="HAMAP" id="MF_02122">
    <property type="entry name" value="DapD_type2"/>
    <property type="match status" value="1"/>
</dbReference>
<dbReference type="InterPro" id="IPR019875">
    <property type="entry name" value="DapD_actinobacteria"/>
</dbReference>
<dbReference type="InterPro" id="IPR001451">
    <property type="entry name" value="Hexapep"/>
</dbReference>
<dbReference type="InterPro" id="IPR032784">
    <property type="entry name" value="THDPS_M"/>
</dbReference>
<dbReference type="InterPro" id="IPR038361">
    <property type="entry name" value="THDPS_M_sf"/>
</dbReference>
<dbReference type="InterPro" id="IPR011004">
    <property type="entry name" value="Trimer_LpxA-like_sf"/>
</dbReference>
<dbReference type="InterPro" id="IPR026586">
    <property type="entry name" value="Type2_DapD"/>
</dbReference>
<dbReference type="NCBIfam" id="TIGR03535">
    <property type="entry name" value="DapD_actino"/>
    <property type="match status" value="1"/>
</dbReference>
<dbReference type="Pfam" id="PF14602">
    <property type="entry name" value="Hexapep_2"/>
    <property type="match status" value="1"/>
</dbReference>
<dbReference type="Pfam" id="PF14789">
    <property type="entry name" value="THDPS_M"/>
    <property type="match status" value="1"/>
</dbReference>
<dbReference type="SUPFAM" id="SSF51161">
    <property type="entry name" value="Trimeric LpxA-like enzymes"/>
    <property type="match status" value="1"/>
</dbReference>
<reference key="1">
    <citation type="journal article" date="2010" name="J. Bacteriol.">
        <title>Genome sequence of the Fleming strain of Micrococcus luteus, a simple free-living actinobacterium.</title>
        <authorList>
            <person name="Young M."/>
            <person name="Artsatbanov V."/>
            <person name="Beller H.R."/>
            <person name="Chandra G."/>
            <person name="Chater K.F."/>
            <person name="Dover L.G."/>
            <person name="Goh E.B."/>
            <person name="Kahan T."/>
            <person name="Kaprelyants A.S."/>
            <person name="Kyrpides N."/>
            <person name="Lapidus A."/>
            <person name="Lowry S.R."/>
            <person name="Lykidis A."/>
            <person name="Mahillon J."/>
            <person name="Markowitz V."/>
            <person name="Mavromatis K."/>
            <person name="Mukamolova G.V."/>
            <person name="Oren A."/>
            <person name="Rokem J.S."/>
            <person name="Smith M.C."/>
            <person name="Young D.I."/>
            <person name="Greenblatt C.L."/>
        </authorList>
    </citation>
    <scope>NUCLEOTIDE SEQUENCE [LARGE SCALE GENOMIC DNA]</scope>
    <source>
        <strain>ATCC 4698 / DSM 20030 / JCM 1464 / CCM 169 / CCUG 5858 / IAM 1056 / NBRC 3333 / NCIMB 9278 / NCTC 2665 / VKM Ac-2230</strain>
    </source>
</reference>
<accession>C5CBB6</accession>